<name>NUC1_YEAST</name>
<sequence length="329" mass="37210">MCSRILLSGLVGLGAGTGLTYLLLNKHSPTQIIETPYPPTQKPNSNIQSHSFNVDPSGFFKYGFPGPIHDLQNREEFISCYNRQTQNPYWVLEHITPESLAARNADRKNSFFKEDEVIPEKFRGKLRDYFRSGYDRGHQAPAADAKFSQQAMDDTFYLSNMCPQVGEGFNRDYWAHLEYFCRGLTKKYKSVRIVTGPLYLPKKDPIDNKFRVNYEVIGNPPSIAVPTHFFKLIVAEAPTANPAREDIAVAAFVLPNEPISNETKLTDFEVPIDALERSTGLELLQKVPPSKKKALCKEVNCQIVVRDFSNAAIKQSKDVKLLPPPKKRN</sequence>
<protein>
    <recommendedName>
        <fullName>Mitochondrial nuclease</fullName>
        <ecNumber>3.1.30.-</ecNumber>
    </recommendedName>
</protein>
<reference key="1">
    <citation type="journal article" date="1988" name="Nucleic Acids Res.">
        <title>Sequence and expression of NUC1, the gene encoding the mitochondrial nuclease in Saccharomyces cerevisiae.</title>
        <authorList>
            <person name="Vincent R.D."/>
            <person name="Hofmann T.J."/>
            <person name="Zassenhaus H.P."/>
        </authorList>
    </citation>
    <scope>NUCLEOTIDE SEQUENCE [GENOMIC DNA]</scope>
    <source>
        <strain>2935-106</strain>
    </source>
</reference>
<reference key="2">
    <citation type="journal article" date="1994" name="Yeast">
        <title>The sequence of a 36 kb segment on the left arm of yeast chromosome X identifies 24 open reading frames including NUC1, PRP21 (SPP91), CDC6, CRY2, the gene for S24, a homologue to the aconitase gene ACO1 and two homologues to chromosome III genes.</title>
        <authorList>
            <person name="Purnelle B."/>
            <person name="Coster F."/>
            <person name="Goffeau A."/>
        </authorList>
    </citation>
    <scope>NUCLEOTIDE SEQUENCE [GENOMIC DNA]</scope>
    <source>
        <strain>ATCC 204508 / S288c</strain>
    </source>
</reference>
<reference key="3">
    <citation type="journal article" date="1994" name="Yeast">
        <title>Sequence analysis of a 40.2 kb DNA fragment located near the left telomere of yeast chromosome X.</title>
        <authorList>
            <person name="Vandenbol M."/>
            <person name="Durand P."/>
            <person name="Bolle P.-A."/>
            <person name="Dion C."/>
            <person name="Portetelle D."/>
            <person name="Hilger F."/>
        </authorList>
    </citation>
    <scope>NUCLEOTIDE SEQUENCE [GENOMIC DNA]</scope>
    <source>
        <strain>ATCC 204508 / S288c</strain>
    </source>
</reference>
<reference key="4">
    <citation type="journal article" date="1996" name="EMBO J.">
        <title>Complete nucleotide sequence of Saccharomyces cerevisiae chromosome X.</title>
        <authorList>
            <person name="Galibert F."/>
            <person name="Alexandraki D."/>
            <person name="Baur A."/>
            <person name="Boles E."/>
            <person name="Chalwatzis N."/>
            <person name="Chuat J.-C."/>
            <person name="Coster F."/>
            <person name="Cziepluch C."/>
            <person name="de Haan M."/>
            <person name="Domdey H."/>
            <person name="Durand P."/>
            <person name="Entian K.-D."/>
            <person name="Gatius M."/>
            <person name="Goffeau A."/>
            <person name="Grivell L.A."/>
            <person name="Hennemann A."/>
            <person name="Herbert C.J."/>
            <person name="Heumann K."/>
            <person name="Hilger F."/>
            <person name="Hollenberg C.P."/>
            <person name="Huang M.-E."/>
            <person name="Jacq C."/>
            <person name="Jauniaux J.-C."/>
            <person name="Katsoulou C."/>
            <person name="Kirchrath L."/>
            <person name="Kleine K."/>
            <person name="Kordes E."/>
            <person name="Koetter P."/>
            <person name="Liebl S."/>
            <person name="Louis E.J."/>
            <person name="Manus V."/>
            <person name="Mewes H.-W."/>
            <person name="Miosga T."/>
            <person name="Obermaier B."/>
            <person name="Perea J."/>
            <person name="Pohl T.M."/>
            <person name="Portetelle D."/>
            <person name="Pujol A."/>
            <person name="Purnelle B."/>
            <person name="Ramezani Rad M."/>
            <person name="Rasmussen S.W."/>
            <person name="Rose M."/>
            <person name="Rossau R."/>
            <person name="Schaaff-Gerstenschlaeger I."/>
            <person name="Smits P.H.M."/>
            <person name="Scarcez T."/>
            <person name="Soriano N."/>
            <person name="To Van D."/>
            <person name="Tzermia M."/>
            <person name="Van Broekhoven A."/>
            <person name="Vandenbol M."/>
            <person name="Wedler H."/>
            <person name="von Wettstein D."/>
            <person name="Wambutt R."/>
            <person name="Zagulski M."/>
            <person name="Zollner A."/>
            <person name="Karpfinger-Hartl L."/>
        </authorList>
    </citation>
    <scope>NUCLEOTIDE SEQUENCE [LARGE SCALE GENOMIC DNA]</scope>
    <source>
        <strain>ATCC 204508 / S288c</strain>
    </source>
</reference>
<reference key="5">
    <citation type="journal article" date="2014" name="G3 (Bethesda)">
        <title>The reference genome sequence of Saccharomyces cerevisiae: Then and now.</title>
        <authorList>
            <person name="Engel S.R."/>
            <person name="Dietrich F.S."/>
            <person name="Fisk D.G."/>
            <person name="Binkley G."/>
            <person name="Balakrishnan R."/>
            <person name="Costanzo M.C."/>
            <person name="Dwight S.S."/>
            <person name="Hitz B.C."/>
            <person name="Karra K."/>
            <person name="Nash R.S."/>
            <person name="Weng S."/>
            <person name="Wong E.D."/>
            <person name="Lloyd P."/>
            <person name="Skrzypek M.S."/>
            <person name="Miyasato S.R."/>
            <person name="Simison M."/>
            <person name="Cherry J.M."/>
        </authorList>
    </citation>
    <scope>GENOME REANNOTATION</scope>
    <source>
        <strain>ATCC 204508 / S288c</strain>
    </source>
</reference>
<reference key="6">
    <citation type="journal article" date="1989" name="Mol. Cell. Biol.">
        <title>Overproduction of yeast viruslike particles by strains deficient in a mitochondrial nuclease.</title>
        <authorList>
            <person name="Liu Y."/>
            <person name="Dieckmann C.L."/>
        </authorList>
    </citation>
    <scope>NUCLEOTIDE SEQUENCE [GENOMIC DNA] OF 204-329</scope>
</reference>
<reference key="7">
    <citation type="journal article" date="2003" name="Mol. Cell">
        <title>Assigning function to yeast proteins by integration of technologies.</title>
        <authorList>
            <person name="Hazbun T.R."/>
            <person name="Malmstroem L."/>
            <person name="Anderson S."/>
            <person name="Graczyk B.J."/>
            <person name="Fox B."/>
            <person name="Riffle M."/>
            <person name="Sundin B.A."/>
            <person name="Aranda J.D."/>
            <person name="McDonald W.H."/>
            <person name="Chiu C.-H."/>
            <person name="Snydsman B.E."/>
            <person name="Bradley P."/>
            <person name="Muller E.G.D."/>
            <person name="Fields S."/>
            <person name="Baker D."/>
            <person name="Yates J.R. III"/>
            <person name="Davis T.N."/>
        </authorList>
    </citation>
    <scope>IDENTIFICATION BY MASS SPECTROMETRY</scope>
</reference>
<reference key="8">
    <citation type="journal article" date="2003" name="Nature">
        <title>Global analysis of protein expression in yeast.</title>
        <authorList>
            <person name="Ghaemmaghami S."/>
            <person name="Huh W.-K."/>
            <person name="Bower K."/>
            <person name="Howson R.W."/>
            <person name="Belle A."/>
            <person name="Dephoure N."/>
            <person name="O'Shea E.K."/>
            <person name="Weissman J.S."/>
        </authorList>
    </citation>
    <scope>LEVEL OF PROTEIN EXPRESSION [LARGE SCALE ANALYSIS]</scope>
</reference>
<comment type="function">
    <text>This enzyme has both RNase and DNase activity.</text>
</comment>
<comment type="cofactor">
    <cofactor>
        <name>Mn(2+)</name>
        <dbReference type="ChEBI" id="CHEBI:29035"/>
    </cofactor>
    <cofactor>
        <name>Mg(2+)</name>
        <dbReference type="ChEBI" id="CHEBI:18420"/>
    </cofactor>
</comment>
<comment type="subunit">
    <text>Homodimer.</text>
</comment>
<comment type="subcellular location">
    <subcellularLocation>
        <location>Mitochondrion inner membrane</location>
    </subcellularLocation>
</comment>
<comment type="miscellaneous">
    <text evidence="3">Present with 3870 molecules/cell in log phase SD medium.</text>
</comment>
<comment type="miscellaneous">
    <text evidence="1">The active site contains 1 hydrated divalent metal cation that has only 1 direct interaction with the protein; all other interactions are via water molecules.</text>
</comment>
<comment type="similarity">
    <text evidence="4">Belongs to the DNA/RNA non-specific endonuclease family.</text>
</comment>
<organism>
    <name type="scientific">Saccharomyces cerevisiae (strain ATCC 204508 / S288c)</name>
    <name type="common">Baker's yeast</name>
    <dbReference type="NCBI Taxonomy" id="559292"/>
    <lineage>
        <taxon>Eukaryota</taxon>
        <taxon>Fungi</taxon>
        <taxon>Dikarya</taxon>
        <taxon>Ascomycota</taxon>
        <taxon>Saccharomycotina</taxon>
        <taxon>Saccharomycetes</taxon>
        <taxon>Saccharomycetales</taxon>
        <taxon>Saccharomycetaceae</taxon>
        <taxon>Saccharomyces</taxon>
    </lineage>
</organism>
<gene>
    <name type="primary">NUC1</name>
    <name type="ordered locus">YJL208C</name>
    <name type="ORF">HRE329</name>
    <name type="ORF">J0310</name>
</gene>
<accession>P08466</accession>
<accession>D6VVY6</accession>
<proteinExistence type="evidence at protein level"/>
<feature type="chain" id="PRO_0000178670" description="Mitochondrial nuclease">
    <location>
        <begin position="1"/>
        <end position="329"/>
    </location>
</feature>
<feature type="active site" description="Proton acceptor" evidence="2">
    <location>
        <position position="138"/>
    </location>
</feature>
<feature type="binding site" evidence="1">
    <location>
        <position position="170"/>
    </location>
    <ligand>
        <name>Mg(2+)</name>
        <dbReference type="ChEBI" id="CHEBI:18420"/>
        <note>catalytic</note>
    </ligand>
</feature>
<keyword id="KW-0255">Endonuclease</keyword>
<keyword id="KW-0378">Hydrolase</keyword>
<keyword id="KW-0460">Magnesium</keyword>
<keyword id="KW-0464">Manganese</keyword>
<keyword id="KW-0472">Membrane</keyword>
<keyword id="KW-0479">Metal-binding</keyword>
<keyword id="KW-0496">Mitochondrion</keyword>
<keyword id="KW-0999">Mitochondrion inner membrane</keyword>
<keyword id="KW-0540">Nuclease</keyword>
<keyword id="KW-1185">Reference proteome</keyword>
<dbReference type="EC" id="3.1.30.-"/>
<dbReference type="EMBL" id="X06670">
    <property type="protein sequence ID" value="CAA29870.1"/>
    <property type="molecule type" value="Genomic_DNA"/>
</dbReference>
<dbReference type="EMBL" id="X77688">
    <property type="protein sequence ID" value="CAA54748.1"/>
    <property type="molecule type" value="Genomic_DNA"/>
</dbReference>
<dbReference type="EMBL" id="Z34098">
    <property type="protein sequence ID" value="CAA84003.1"/>
    <property type="molecule type" value="Genomic_DNA"/>
</dbReference>
<dbReference type="EMBL" id="Z49483">
    <property type="protein sequence ID" value="CAA89505.1"/>
    <property type="molecule type" value="Genomic_DNA"/>
</dbReference>
<dbReference type="EMBL" id="M28067">
    <property type="protein sequence ID" value="AAA34457.1"/>
    <property type="molecule type" value="Genomic_DNA"/>
</dbReference>
<dbReference type="EMBL" id="BK006943">
    <property type="protein sequence ID" value="DAA08602.1"/>
    <property type="molecule type" value="Genomic_DNA"/>
</dbReference>
<dbReference type="PIR" id="S05888">
    <property type="entry name" value="NCBYN1"/>
</dbReference>
<dbReference type="RefSeq" id="NP_012327.1">
    <property type="nucleotide sequence ID" value="NM_001181641.1"/>
</dbReference>
<dbReference type="SMR" id="P08466"/>
<dbReference type="BioGRID" id="33550">
    <property type="interactions" value="153"/>
</dbReference>
<dbReference type="DIP" id="DIP-5041N"/>
<dbReference type="FunCoup" id="P08466">
    <property type="interactions" value="308"/>
</dbReference>
<dbReference type="IntAct" id="P08466">
    <property type="interactions" value="7"/>
</dbReference>
<dbReference type="STRING" id="4932.YJL208C"/>
<dbReference type="SwissPalm" id="P08466"/>
<dbReference type="PaxDb" id="4932-YJL208C"/>
<dbReference type="PeptideAtlas" id="P08466"/>
<dbReference type="TopDownProteomics" id="P08466"/>
<dbReference type="EnsemblFungi" id="YJL208C_mRNA">
    <property type="protein sequence ID" value="YJL208C"/>
    <property type="gene ID" value="YJL208C"/>
</dbReference>
<dbReference type="GeneID" id="853222"/>
<dbReference type="KEGG" id="sce:YJL208C"/>
<dbReference type="AGR" id="SGD:S000003744"/>
<dbReference type="SGD" id="S000003744">
    <property type="gene designation" value="NUC1"/>
</dbReference>
<dbReference type="VEuPathDB" id="FungiDB:YJL208C"/>
<dbReference type="eggNOG" id="KOG3721">
    <property type="taxonomic scope" value="Eukaryota"/>
</dbReference>
<dbReference type="GeneTree" id="ENSGT00940000160987"/>
<dbReference type="HOGENOM" id="CLU_055174_0_2_1"/>
<dbReference type="InParanoid" id="P08466"/>
<dbReference type="OMA" id="YVMPNQV"/>
<dbReference type="OrthoDB" id="5418055at2759"/>
<dbReference type="BioCyc" id="YEAST:G3O-31636-MONOMER"/>
<dbReference type="BioGRID-ORCS" id="853222">
    <property type="hits" value="0 hits in 10 CRISPR screens"/>
</dbReference>
<dbReference type="PRO" id="PR:P08466"/>
<dbReference type="Proteomes" id="UP000002311">
    <property type="component" value="Chromosome X"/>
</dbReference>
<dbReference type="RNAct" id="P08466">
    <property type="molecule type" value="protein"/>
</dbReference>
<dbReference type="GO" id="GO:0005829">
    <property type="term" value="C:cytosol"/>
    <property type="evidence" value="ECO:0000314"/>
    <property type="project" value="SGD"/>
</dbReference>
<dbReference type="GO" id="GO:0005743">
    <property type="term" value="C:mitochondrial inner membrane"/>
    <property type="evidence" value="ECO:0000314"/>
    <property type="project" value="SGD"/>
</dbReference>
<dbReference type="GO" id="GO:0005739">
    <property type="term" value="C:mitochondrion"/>
    <property type="evidence" value="ECO:0007005"/>
    <property type="project" value="SGD"/>
</dbReference>
<dbReference type="GO" id="GO:0005634">
    <property type="term" value="C:nucleus"/>
    <property type="evidence" value="ECO:0000314"/>
    <property type="project" value="SGD"/>
</dbReference>
<dbReference type="GO" id="GO:0004520">
    <property type="term" value="F:DNA endonuclease activity"/>
    <property type="evidence" value="ECO:0000314"/>
    <property type="project" value="SGD"/>
</dbReference>
<dbReference type="GO" id="GO:0004529">
    <property type="term" value="F:DNA exonuclease activity"/>
    <property type="evidence" value="ECO:0000314"/>
    <property type="project" value="SGD"/>
</dbReference>
<dbReference type="GO" id="GO:0046872">
    <property type="term" value="F:metal ion binding"/>
    <property type="evidence" value="ECO:0007669"/>
    <property type="project" value="UniProtKB-KW"/>
</dbReference>
<dbReference type="GO" id="GO:0003676">
    <property type="term" value="F:nucleic acid binding"/>
    <property type="evidence" value="ECO:0007669"/>
    <property type="project" value="InterPro"/>
</dbReference>
<dbReference type="GO" id="GO:0004521">
    <property type="term" value="F:RNA endonuclease activity"/>
    <property type="evidence" value="ECO:0000318"/>
    <property type="project" value="GO_Central"/>
</dbReference>
<dbReference type="GO" id="GO:0004540">
    <property type="term" value="F:RNA nuclease activity"/>
    <property type="evidence" value="ECO:0000314"/>
    <property type="project" value="SGD"/>
</dbReference>
<dbReference type="GO" id="GO:0000014">
    <property type="term" value="F:single-stranded DNA endodeoxyribonuclease activity"/>
    <property type="evidence" value="ECO:0000318"/>
    <property type="project" value="GO_Central"/>
</dbReference>
<dbReference type="GO" id="GO:0006309">
    <property type="term" value="P:apoptotic DNA fragmentation"/>
    <property type="evidence" value="ECO:0000315"/>
    <property type="project" value="SGD"/>
</dbReference>
<dbReference type="GO" id="GO:0006915">
    <property type="term" value="P:apoptotic process"/>
    <property type="evidence" value="ECO:0000315"/>
    <property type="project" value="SGD"/>
</dbReference>
<dbReference type="GO" id="GO:0051607">
    <property type="term" value="P:defense response to virus"/>
    <property type="evidence" value="ECO:0000314"/>
    <property type="project" value="SGD"/>
</dbReference>
<dbReference type="GO" id="GO:0006308">
    <property type="term" value="P:DNA catabolic process"/>
    <property type="evidence" value="ECO:0000314"/>
    <property type="project" value="SGD"/>
</dbReference>
<dbReference type="GO" id="GO:0006310">
    <property type="term" value="P:DNA recombination"/>
    <property type="evidence" value="ECO:0000315"/>
    <property type="project" value="SGD"/>
</dbReference>
<dbReference type="GO" id="GO:0006401">
    <property type="term" value="P:RNA catabolic process"/>
    <property type="evidence" value="ECO:0000314"/>
    <property type="project" value="SGD"/>
</dbReference>
<dbReference type="CDD" id="cd00091">
    <property type="entry name" value="NUC"/>
    <property type="match status" value="1"/>
</dbReference>
<dbReference type="FunFam" id="3.40.570.10:FF:000004">
    <property type="entry name" value="Nuclease 1, mitochondrial"/>
    <property type="match status" value="1"/>
</dbReference>
<dbReference type="Gene3D" id="3.40.570.10">
    <property type="entry name" value="Extracellular Endonuclease, subunit A"/>
    <property type="match status" value="1"/>
</dbReference>
<dbReference type="InterPro" id="IPR018524">
    <property type="entry name" value="DNA/RNA_endonuclease_AS"/>
</dbReference>
<dbReference type="InterPro" id="IPR044929">
    <property type="entry name" value="DNA/RNA_non-sp_Endonuclease_sf"/>
</dbReference>
<dbReference type="InterPro" id="IPR001604">
    <property type="entry name" value="Endo_G_ENPP1-like_dom"/>
</dbReference>
<dbReference type="InterPro" id="IPR020821">
    <property type="entry name" value="ENPP1-3/EXOG-like_nuc-like"/>
</dbReference>
<dbReference type="InterPro" id="IPR044925">
    <property type="entry name" value="His-Me_finger_sf"/>
</dbReference>
<dbReference type="InterPro" id="IPR040255">
    <property type="entry name" value="Non-specific_endonuclease"/>
</dbReference>
<dbReference type="PANTHER" id="PTHR13966:SF5">
    <property type="entry name" value="ENDONUCLEASE G, MITOCHONDRIAL"/>
    <property type="match status" value="1"/>
</dbReference>
<dbReference type="PANTHER" id="PTHR13966">
    <property type="entry name" value="ENDONUCLEASE RELATED"/>
    <property type="match status" value="1"/>
</dbReference>
<dbReference type="Pfam" id="PF01223">
    <property type="entry name" value="Endonuclease_NS"/>
    <property type="match status" value="1"/>
</dbReference>
<dbReference type="SMART" id="SM00892">
    <property type="entry name" value="Endonuclease_NS"/>
    <property type="match status" value="1"/>
</dbReference>
<dbReference type="SMART" id="SM00477">
    <property type="entry name" value="NUC"/>
    <property type="match status" value="1"/>
</dbReference>
<dbReference type="SUPFAM" id="SSF54060">
    <property type="entry name" value="His-Me finger endonucleases"/>
    <property type="match status" value="1"/>
</dbReference>
<dbReference type="PROSITE" id="PS01070">
    <property type="entry name" value="NUCLEASE_NON_SPEC"/>
    <property type="match status" value="1"/>
</dbReference>
<evidence type="ECO:0000250" key="1"/>
<evidence type="ECO:0000255" key="2">
    <source>
        <dbReference type="PROSITE-ProRule" id="PRU10047"/>
    </source>
</evidence>
<evidence type="ECO:0000269" key="3">
    <source>
    </source>
</evidence>
<evidence type="ECO:0000305" key="4"/>